<proteinExistence type="inferred from homology"/>
<gene>
    <name evidence="1" type="primary">truA</name>
    <name type="ordered locus">Pnuc_0770</name>
</gene>
<name>TRUA_POLAQ</name>
<feature type="chain" id="PRO_1000194566" description="tRNA pseudouridine synthase A">
    <location>
        <begin position="1"/>
        <end position="275"/>
    </location>
</feature>
<feature type="active site" description="Nucleophile" evidence="1">
    <location>
        <position position="56"/>
    </location>
</feature>
<feature type="binding site" evidence="1">
    <location>
        <position position="114"/>
    </location>
    <ligand>
        <name>substrate</name>
    </ligand>
</feature>
<comment type="function">
    <text evidence="1">Formation of pseudouridine at positions 38, 39 and 40 in the anticodon stem and loop of transfer RNAs.</text>
</comment>
<comment type="catalytic activity">
    <reaction evidence="1">
        <text>uridine(38/39/40) in tRNA = pseudouridine(38/39/40) in tRNA</text>
        <dbReference type="Rhea" id="RHEA:22376"/>
        <dbReference type="Rhea" id="RHEA-COMP:10085"/>
        <dbReference type="Rhea" id="RHEA-COMP:10087"/>
        <dbReference type="ChEBI" id="CHEBI:65314"/>
        <dbReference type="ChEBI" id="CHEBI:65315"/>
        <dbReference type="EC" id="5.4.99.12"/>
    </reaction>
</comment>
<comment type="subunit">
    <text evidence="1">Homodimer.</text>
</comment>
<comment type="similarity">
    <text evidence="1">Belongs to the tRNA pseudouridine synthase TruA family.</text>
</comment>
<evidence type="ECO:0000255" key="1">
    <source>
        <dbReference type="HAMAP-Rule" id="MF_00171"/>
    </source>
</evidence>
<protein>
    <recommendedName>
        <fullName evidence="1">tRNA pseudouridine synthase A</fullName>
        <ecNumber evidence="1">5.4.99.12</ecNumber>
    </recommendedName>
    <alternativeName>
        <fullName evidence="1">tRNA pseudouridine(38-40) synthase</fullName>
    </alternativeName>
    <alternativeName>
        <fullName evidence="1">tRNA pseudouridylate synthase I</fullName>
    </alternativeName>
    <alternativeName>
        <fullName evidence="1">tRNA-uridine isomerase I</fullName>
    </alternativeName>
</protein>
<sequence length="275" mass="30997">MRIALGLQYDGSPYAGWQTQLHQPTIQDELEKALTAFIGEEAKAFPVHTITAGRTDTGVHALGQVVHFDTNVGREDFSWVRGVNTFLPKSIVVNWAKEVPEEFSARFSAYERTYIYALHAGPCRSPIVNARAGYLMLPPDQFLDVEAMKKSAECLIGEHDFSSFRSSECQSKTPVKTIYAIDIISQEPWVYFRIRGNAFLHHMIRNIVGCFLQIGQGRQQSGWMAEVLTAKNRQIAAPTFMADGLYLAKIKYPEEFAIPQPWLENAWLPTNVIGK</sequence>
<organism>
    <name type="scientific">Polynucleobacter asymbioticus (strain DSM 18221 / CIP 109841 / QLW-P1DMWA-1)</name>
    <name type="common">Polynucleobacter necessarius subsp. asymbioticus</name>
    <dbReference type="NCBI Taxonomy" id="312153"/>
    <lineage>
        <taxon>Bacteria</taxon>
        <taxon>Pseudomonadati</taxon>
        <taxon>Pseudomonadota</taxon>
        <taxon>Betaproteobacteria</taxon>
        <taxon>Burkholderiales</taxon>
        <taxon>Burkholderiaceae</taxon>
        <taxon>Polynucleobacter</taxon>
    </lineage>
</organism>
<dbReference type="EC" id="5.4.99.12" evidence="1"/>
<dbReference type="EMBL" id="CP000655">
    <property type="protein sequence ID" value="ABP33988.1"/>
    <property type="molecule type" value="Genomic_DNA"/>
</dbReference>
<dbReference type="RefSeq" id="WP_011902613.1">
    <property type="nucleotide sequence ID" value="NC_009379.1"/>
</dbReference>
<dbReference type="SMR" id="A4SWX4"/>
<dbReference type="GeneID" id="31481131"/>
<dbReference type="KEGG" id="pnu:Pnuc_0770"/>
<dbReference type="eggNOG" id="COG0101">
    <property type="taxonomic scope" value="Bacteria"/>
</dbReference>
<dbReference type="HOGENOM" id="CLU_014673_0_2_4"/>
<dbReference type="Proteomes" id="UP000000231">
    <property type="component" value="Chromosome"/>
</dbReference>
<dbReference type="GO" id="GO:0003723">
    <property type="term" value="F:RNA binding"/>
    <property type="evidence" value="ECO:0007669"/>
    <property type="project" value="InterPro"/>
</dbReference>
<dbReference type="GO" id="GO:0160147">
    <property type="term" value="F:tRNA pseudouridine(38-40) synthase activity"/>
    <property type="evidence" value="ECO:0007669"/>
    <property type="project" value="UniProtKB-EC"/>
</dbReference>
<dbReference type="GO" id="GO:0031119">
    <property type="term" value="P:tRNA pseudouridine synthesis"/>
    <property type="evidence" value="ECO:0007669"/>
    <property type="project" value="UniProtKB-UniRule"/>
</dbReference>
<dbReference type="CDD" id="cd02570">
    <property type="entry name" value="PseudoU_synth_EcTruA"/>
    <property type="match status" value="1"/>
</dbReference>
<dbReference type="FunFam" id="3.30.70.580:FF:000001">
    <property type="entry name" value="tRNA pseudouridine synthase A"/>
    <property type="match status" value="1"/>
</dbReference>
<dbReference type="Gene3D" id="3.30.70.660">
    <property type="entry name" value="Pseudouridine synthase I, catalytic domain, C-terminal subdomain"/>
    <property type="match status" value="1"/>
</dbReference>
<dbReference type="Gene3D" id="3.30.70.580">
    <property type="entry name" value="Pseudouridine synthase I, catalytic domain, N-terminal subdomain"/>
    <property type="match status" value="1"/>
</dbReference>
<dbReference type="HAMAP" id="MF_00171">
    <property type="entry name" value="TruA"/>
    <property type="match status" value="1"/>
</dbReference>
<dbReference type="InterPro" id="IPR020103">
    <property type="entry name" value="PsdUridine_synth_cat_dom_sf"/>
</dbReference>
<dbReference type="InterPro" id="IPR001406">
    <property type="entry name" value="PsdUridine_synth_TruA"/>
</dbReference>
<dbReference type="InterPro" id="IPR020097">
    <property type="entry name" value="PsdUridine_synth_TruA_a/b_dom"/>
</dbReference>
<dbReference type="InterPro" id="IPR020095">
    <property type="entry name" value="PsdUridine_synth_TruA_C"/>
</dbReference>
<dbReference type="InterPro" id="IPR020094">
    <property type="entry name" value="TruA/RsuA/RluB/E/F_N"/>
</dbReference>
<dbReference type="NCBIfam" id="TIGR00071">
    <property type="entry name" value="hisT_truA"/>
    <property type="match status" value="1"/>
</dbReference>
<dbReference type="PANTHER" id="PTHR11142">
    <property type="entry name" value="PSEUDOURIDYLATE SYNTHASE"/>
    <property type="match status" value="1"/>
</dbReference>
<dbReference type="PANTHER" id="PTHR11142:SF0">
    <property type="entry name" value="TRNA PSEUDOURIDINE SYNTHASE-LIKE 1"/>
    <property type="match status" value="1"/>
</dbReference>
<dbReference type="Pfam" id="PF01416">
    <property type="entry name" value="PseudoU_synth_1"/>
    <property type="match status" value="2"/>
</dbReference>
<dbReference type="PIRSF" id="PIRSF001430">
    <property type="entry name" value="tRNA_psdUrid_synth"/>
    <property type="match status" value="1"/>
</dbReference>
<dbReference type="SUPFAM" id="SSF55120">
    <property type="entry name" value="Pseudouridine synthase"/>
    <property type="match status" value="1"/>
</dbReference>
<accession>A4SWX4</accession>
<reference key="1">
    <citation type="journal article" date="2012" name="Stand. Genomic Sci.">
        <title>Complete genome sequence of Polynucleobacter necessarius subsp. asymbioticus type strain (QLW-P1DMWA-1(T)).</title>
        <authorList>
            <person name="Meincke L."/>
            <person name="Copeland A."/>
            <person name="Lapidus A."/>
            <person name="Lucas S."/>
            <person name="Berry K.W."/>
            <person name="Del Rio T.G."/>
            <person name="Hammon N."/>
            <person name="Dalin E."/>
            <person name="Tice H."/>
            <person name="Pitluck S."/>
            <person name="Richardson P."/>
            <person name="Bruce D."/>
            <person name="Goodwin L."/>
            <person name="Han C."/>
            <person name="Tapia R."/>
            <person name="Detter J.C."/>
            <person name="Schmutz J."/>
            <person name="Brettin T."/>
            <person name="Larimer F."/>
            <person name="Land M."/>
            <person name="Hauser L."/>
            <person name="Kyrpides N.C."/>
            <person name="Ivanova N."/>
            <person name="Goker M."/>
            <person name="Woyke T."/>
            <person name="Wu Q.L."/>
            <person name="Pockl M."/>
            <person name="Hahn M.W."/>
            <person name="Klenk H.P."/>
        </authorList>
    </citation>
    <scope>NUCLEOTIDE SEQUENCE [LARGE SCALE GENOMIC DNA]</scope>
    <source>
        <strain>DSM 18221 / CIP 109841 / QLW-P1DMWA-1</strain>
    </source>
</reference>
<keyword id="KW-0413">Isomerase</keyword>
<keyword id="KW-1185">Reference proteome</keyword>
<keyword id="KW-0819">tRNA processing</keyword>